<keyword id="KW-0002">3D-structure</keyword>
<keyword id="KW-0007">Acetylation</keyword>
<keyword id="KW-0025">Alternative splicing</keyword>
<keyword id="KW-0963">Cytoplasm</keyword>
<keyword id="KW-0539">Nucleus</keyword>
<keyword id="KW-0597">Phosphoprotein</keyword>
<keyword id="KW-1267">Proteomics identification</keyword>
<keyword id="KW-1185">Reference proteome</keyword>
<keyword id="KW-0808">Transferase</keyword>
<keyword id="KW-0833">Ubl conjugation pathway</keyword>
<name>UBE4B_HUMAN</name>
<proteinExistence type="evidence at protein level"/>
<reference key="1">
    <citation type="journal article" date="1998" name="Genomics">
        <title>Molecular cloning and expression analysis of five novel genes in chromosome 1p36.</title>
        <authorList>
            <person name="Onyango P."/>
            <person name="Lubyova B."/>
            <person name="Gardellin P."/>
            <person name="Kurzbauer R."/>
            <person name="Weith A."/>
        </authorList>
    </citation>
    <scope>NUCLEOTIDE SEQUENCE [MRNA] (ISOFORM 1)</scope>
    <source>
        <tissue>Brain</tissue>
    </source>
</reference>
<reference key="2">
    <citation type="journal article" date="2000" name="Oncogene">
        <title>Identification and characterization of a 500-kb homozygously deleted region at 1p36.2-p36.3 in a neuroblastoma cell line.</title>
        <authorList>
            <person name="Ohira M."/>
            <person name="Kageyama H."/>
            <person name="Mihara M."/>
            <person name="Furuta S."/>
            <person name="Machida T."/>
            <person name="Shishikura T."/>
            <person name="Takayasu H."/>
            <person name="Islam A."/>
            <person name="Nakamura Y."/>
            <person name="Takahashi M."/>
            <person name="Tomioka N."/>
            <person name="Sakiyama S."/>
            <person name="Kaneko Y."/>
            <person name="Toyoda A."/>
            <person name="Hattori M."/>
            <person name="Sakaki Y."/>
            <person name="Ohki M."/>
            <person name="Horii A."/>
            <person name="Soeda E."/>
            <person name="Inazawa J."/>
            <person name="Seki N."/>
            <person name="Kuma H."/>
            <person name="Nozawa I."/>
            <person name="Nakagawara A."/>
        </authorList>
    </citation>
    <scope>NUCLEOTIDE SEQUENCE [MRNA] (ISOFORM 2)</scope>
    <source>
        <tissue>Substantia nigra</tissue>
    </source>
</reference>
<reference key="3">
    <citation type="journal article" date="2002" name="Biochem. J.">
        <title>The human homologue of the yeast polyubiquitination factor Ufd2p is cleaved by caspase 6 and granzyme B during apoptosis.</title>
        <authorList>
            <person name="Mahoney J.A."/>
            <person name="Odin J.A."/>
            <person name="White S.M."/>
            <person name="Shaffer D."/>
            <person name="Koff A."/>
            <person name="Casciola-Rosen L."/>
            <person name="Rosen A."/>
        </authorList>
    </citation>
    <scope>NUCLEOTIDE SEQUENCE [MRNA] (ISOFORM 2)</scope>
    <scope>TISSUE SPECIFICITY</scope>
    <scope>MUTAGENESIS OF ASP-109; ASP-121 AND ASP-123</scope>
    <scope>CLEAVAGE BY CASPASES</scope>
</reference>
<reference key="4">
    <citation type="journal article" date="2011" name="PLoS ONE">
        <title>A novel conserved isoform of the ubiquitin ligase UFD2a/UBE4B is expressed exclusively in mature striated muscle cells.</title>
        <authorList>
            <person name="Mammen A.L."/>
            <person name="Mahoney J.A."/>
            <person name="St Germain A."/>
            <person name="Badders N."/>
            <person name="Taylor J.P."/>
            <person name="Rosen A."/>
            <person name="Spinette S."/>
        </authorList>
    </citation>
    <scope>NUCLEOTIDE SEQUENCE [MRNA] (ISOFORM 4)</scope>
    <scope>ALTERNATIVE SPLICING</scope>
    <source>
        <tissue>Skeletal muscle</tissue>
    </source>
</reference>
<reference key="5">
    <citation type="journal article" date="1998" name="DNA Res.">
        <title>Prediction of the coding sequences of unidentified human genes. X. The complete sequences of 100 new cDNA clones from brain which can code for large proteins in vitro.</title>
        <authorList>
            <person name="Ishikawa K."/>
            <person name="Nagase T."/>
            <person name="Suyama M."/>
            <person name="Miyajima N."/>
            <person name="Tanaka A."/>
            <person name="Kotani H."/>
            <person name="Nomura N."/>
            <person name="Ohara O."/>
        </authorList>
    </citation>
    <scope>NUCLEOTIDE SEQUENCE [LARGE SCALE MRNA] (ISOFORM 2)</scope>
    <source>
        <tissue>Brain</tissue>
    </source>
</reference>
<reference key="6">
    <citation type="submission" date="2003-08" db="EMBL/GenBank/DDBJ databases">
        <authorList>
            <person name="Ohara O."/>
            <person name="Suyama M."/>
            <person name="Nagase T."/>
            <person name="Ishikawa K."/>
        </authorList>
    </citation>
    <scope>SEQUENCE REVISION</scope>
</reference>
<reference key="7">
    <citation type="journal article" date="2004" name="Nat. Genet.">
        <title>Complete sequencing and characterization of 21,243 full-length human cDNAs.</title>
        <authorList>
            <person name="Ota T."/>
            <person name="Suzuki Y."/>
            <person name="Nishikawa T."/>
            <person name="Otsuki T."/>
            <person name="Sugiyama T."/>
            <person name="Irie R."/>
            <person name="Wakamatsu A."/>
            <person name="Hayashi K."/>
            <person name="Sato H."/>
            <person name="Nagai K."/>
            <person name="Kimura K."/>
            <person name="Makita H."/>
            <person name="Sekine M."/>
            <person name="Obayashi M."/>
            <person name="Nishi T."/>
            <person name="Shibahara T."/>
            <person name="Tanaka T."/>
            <person name="Ishii S."/>
            <person name="Yamamoto J."/>
            <person name="Saito K."/>
            <person name="Kawai Y."/>
            <person name="Isono Y."/>
            <person name="Nakamura Y."/>
            <person name="Nagahari K."/>
            <person name="Murakami K."/>
            <person name="Yasuda T."/>
            <person name="Iwayanagi T."/>
            <person name="Wagatsuma M."/>
            <person name="Shiratori A."/>
            <person name="Sudo H."/>
            <person name="Hosoiri T."/>
            <person name="Kaku Y."/>
            <person name="Kodaira H."/>
            <person name="Kondo H."/>
            <person name="Sugawara M."/>
            <person name="Takahashi M."/>
            <person name="Kanda K."/>
            <person name="Yokoi T."/>
            <person name="Furuya T."/>
            <person name="Kikkawa E."/>
            <person name="Omura Y."/>
            <person name="Abe K."/>
            <person name="Kamihara K."/>
            <person name="Katsuta N."/>
            <person name="Sato K."/>
            <person name="Tanikawa M."/>
            <person name="Yamazaki M."/>
            <person name="Ninomiya K."/>
            <person name="Ishibashi T."/>
            <person name="Yamashita H."/>
            <person name="Murakawa K."/>
            <person name="Fujimori K."/>
            <person name="Tanai H."/>
            <person name="Kimata M."/>
            <person name="Watanabe M."/>
            <person name="Hiraoka S."/>
            <person name="Chiba Y."/>
            <person name="Ishida S."/>
            <person name="Ono Y."/>
            <person name="Takiguchi S."/>
            <person name="Watanabe S."/>
            <person name="Yosida M."/>
            <person name="Hotuta T."/>
            <person name="Kusano J."/>
            <person name="Kanehori K."/>
            <person name="Takahashi-Fujii A."/>
            <person name="Hara H."/>
            <person name="Tanase T.-O."/>
            <person name="Nomura Y."/>
            <person name="Togiya S."/>
            <person name="Komai F."/>
            <person name="Hara R."/>
            <person name="Takeuchi K."/>
            <person name="Arita M."/>
            <person name="Imose N."/>
            <person name="Musashino K."/>
            <person name="Yuuki H."/>
            <person name="Oshima A."/>
            <person name="Sasaki N."/>
            <person name="Aotsuka S."/>
            <person name="Yoshikawa Y."/>
            <person name="Matsunawa H."/>
            <person name="Ichihara T."/>
            <person name="Shiohata N."/>
            <person name="Sano S."/>
            <person name="Moriya S."/>
            <person name="Momiyama H."/>
            <person name="Satoh N."/>
            <person name="Takami S."/>
            <person name="Terashima Y."/>
            <person name="Suzuki O."/>
            <person name="Nakagawa S."/>
            <person name="Senoh A."/>
            <person name="Mizoguchi H."/>
            <person name="Goto Y."/>
            <person name="Shimizu F."/>
            <person name="Wakebe H."/>
            <person name="Hishigaki H."/>
            <person name="Watanabe T."/>
            <person name="Sugiyama A."/>
            <person name="Takemoto M."/>
            <person name="Kawakami B."/>
            <person name="Yamazaki M."/>
            <person name="Watanabe K."/>
            <person name="Kumagai A."/>
            <person name="Itakura S."/>
            <person name="Fukuzumi Y."/>
            <person name="Fujimori Y."/>
            <person name="Komiyama M."/>
            <person name="Tashiro H."/>
            <person name="Tanigami A."/>
            <person name="Fujiwara T."/>
            <person name="Ono T."/>
            <person name="Yamada K."/>
            <person name="Fujii Y."/>
            <person name="Ozaki K."/>
            <person name="Hirao M."/>
            <person name="Ohmori Y."/>
            <person name="Kawabata A."/>
            <person name="Hikiji T."/>
            <person name="Kobatake N."/>
            <person name="Inagaki H."/>
            <person name="Ikema Y."/>
            <person name="Okamoto S."/>
            <person name="Okitani R."/>
            <person name="Kawakami T."/>
            <person name="Noguchi S."/>
            <person name="Itoh T."/>
            <person name="Shigeta K."/>
            <person name="Senba T."/>
            <person name="Matsumura K."/>
            <person name="Nakajima Y."/>
            <person name="Mizuno T."/>
            <person name="Morinaga M."/>
            <person name="Sasaki M."/>
            <person name="Togashi T."/>
            <person name="Oyama M."/>
            <person name="Hata H."/>
            <person name="Watanabe M."/>
            <person name="Komatsu T."/>
            <person name="Mizushima-Sugano J."/>
            <person name="Satoh T."/>
            <person name="Shirai Y."/>
            <person name="Takahashi Y."/>
            <person name="Nakagawa K."/>
            <person name="Okumura K."/>
            <person name="Nagase T."/>
            <person name="Nomura N."/>
            <person name="Kikuchi H."/>
            <person name="Masuho Y."/>
            <person name="Yamashita R."/>
            <person name="Nakai K."/>
            <person name="Yada T."/>
            <person name="Nakamura Y."/>
            <person name="Ohara O."/>
            <person name="Isogai T."/>
            <person name="Sugano S."/>
        </authorList>
    </citation>
    <scope>NUCLEOTIDE SEQUENCE [LARGE SCALE MRNA] (ISOFORM 2)</scope>
    <source>
        <tissue>Testis</tissue>
    </source>
</reference>
<reference key="8">
    <citation type="journal article" date="2006" name="Nature">
        <title>The DNA sequence and biological annotation of human chromosome 1.</title>
        <authorList>
            <person name="Gregory S.G."/>
            <person name="Barlow K.F."/>
            <person name="McLay K.E."/>
            <person name="Kaul R."/>
            <person name="Swarbreck D."/>
            <person name="Dunham A."/>
            <person name="Scott C.E."/>
            <person name="Howe K.L."/>
            <person name="Woodfine K."/>
            <person name="Spencer C.C.A."/>
            <person name="Jones M.C."/>
            <person name="Gillson C."/>
            <person name="Searle S."/>
            <person name="Zhou Y."/>
            <person name="Kokocinski F."/>
            <person name="McDonald L."/>
            <person name="Evans R."/>
            <person name="Phillips K."/>
            <person name="Atkinson A."/>
            <person name="Cooper R."/>
            <person name="Jones C."/>
            <person name="Hall R.E."/>
            <person name="Andrews T.D."/>
            <person name="Lloyd C."/>
            <person name="Ainscough R."/>
            <person name="Almeida J.P."/>
            <person name="Ambrose K.D."/>
            <person name="Anderson F."/>
            <person name="Andrew R.W."/>
            <person name="Ashwell R.I.S."/>
            <person name="Aubin K."/>
            <person name="Babbage A.K."/>
            <person name="Bagguley C.L."/>
            <person name="Bailey J."/>
            <person name="Beasley H."/>
            <person name="Bethel G."/>
            <person name="Bird C.P."/>
            <person name="Bray-Allen S."/>
            <person name="Brown J.Y."/>
            <person name="Brown A.J."/>
            <person name="Buckley D."/>
            <person name="Burton J."/>
            <person name="Bye J."/>
            <person name="Carder C."/>
            <person name="Chapman J.C."/>
            <person name="Clark S.Y."/>
            <person name="Clarke G."/>
            <person name="Clee C."/>
            <person name="Cobley V."/>
            <person name="Collier R.E."/>
            <person name="Corby N."/>
            <person name="Coville G.J."/>
            <person name="Davies J."/>
            <person name="Deadman R."/>
            <person name="Dunn M."/>
            <person name="Earthrowl M."/>
            <person name="Ellington A.G."/>
            <person name="Errington H."/>
            <person name="Frankish A."/>
            <person name="Frankland J."/>
            <person name="French L."/>
            <person name="Garner P."/>
            <person name="Garnett J."/>
            <person name="Gay L."/>
            <person name="Ghori M.R.J."/>
            <person name="Gibson R."/>
            <person name="Gilby L.M."/>
            <person name="Gillett W."/>
            <person name="Glithero R.J."/>
            <person name="Grafham D.V."/>
            <person name="Griffiths C."/>
            <person name="Griffiths-Jones S."/>
            <person name="Grocock R."/>
            <person name="Hammond S."/>
            <person name="Harrison E.S.I."/>
            <person name="Hart E."/>
            <person name="Haugen E."/>
            <person name="Heath P.D."/>
            <person name="Holmes S."/>
            <person name="Holt K."/>
            <person name="Howden P.J."/>
            <person name="Hunt A.R."/>
            <person name="Hunt S.E."/>
            <person name="Hunter G."/>
            <person name="Isherwood J."/>
            <person name="James R."/>
            <person name="Johnson C."/>
            <person name="Johnson D."/>
            <person name="Joy A."/>
            <person name="Kay M."/>
            <person name="Kershaw J.K."/>
            <person name="Kibukawa M."/>
            <person name="Kimberley A.M."/>
            <person name="King A."/>
            <person name="Knights A.J."/>
            <person name="Lad H."/>
            <person name="Laird G."/>
            <person name="Lawlor S."/>
            <person name="Leongamornlert D.A."/>
            <person name="Lloyd D.M."/>
            <person name="Loveland J."/>
            <person name="Lovell J."/>
            <person name="Lush M.J."/>
            <person name="Lyne R."/>
            <person name="Martin S."/>
            <person name="Mashreghi-Mohammadi M."/>
            <person name="Matthews L."/>
            <person name="Matthews N.S.W."/>
            <person name="McLaren S."/>
            <person name="Milne S."/>
            <person name="Mistry S."/>
            <person name="Moore M.J.F."/>
            <person name="Nickerson T."/>
            <person name="O'Dell C.N."/>
            <person name="Oliver K."/>
            <person name="Palmeiri A."/>
            <person name="Palmer S.A."/>
            <person name="Parker A."/>
            <person name="Patel D."/>
            <person name="Pearce A.V."/>
            <person name="Peck A.I."/>
            <person name="Pelan S."/>
            <person name="Phelps K."/>
            <person name="Phillimore B.J."/>
            <person name="Plumb R."/>
            <person name="Rajan J."/>
            <person name="Raymond C."/>
            <person name="Rouse G."/>
            <person name="Saenphimmachak C."/>
            <person name="Sehra H.K."/>
            <person name="Sheridan E."/>
            <person name="Shownkeen R."/>
            <person name="Sims S."/>
            <person name="Skuce C.D."/>
            <person name="Smith M."/>
            <person name="Steward C."/>
            <person name="Subramanian S."/>
            <person name="Sycamore N."/>
            <person name="Tracey A."/>
            <person name="Tromans A."/>
            <person name="Van Helmond Z."/>
            <person name="Wall M."/>
            <person name="Wallis J.M."/>
            <person name="White S."/>
            <person name="Whitehead S.L."/>
            <person name="Wilkinson J.E."/>
            <person name="Willey D.L."/>
            <person name="Williams H."/>
            <person name="Wilming L."/>
            <person name="Wray P.W."/>
            <person name="Wu Z."/>
            <person name="Coulson A."/>
            <person name="Vaudin M."/>
            <person name="Sulston J.E."/>
            <person name="Durbin R.M."/>
            <person name="Hubbard T."/>
            <person name="Wooster R."/>
            <person name="Dunham I."/>
            <person name="Carter N.P."/>
            <person name="McVean G."/>
            <person name="Ross M.T."/>
            <person name="Harrow J."/>
            <person name="Olson M.V."/>
            <person name="Beck S."/>
            <person name="Rogers J."/>
            <person name="Bentley D.R."/>
        </authorList>
    </citation>
    <scope>NUCLEOTIDE SEQUENCE [LARGE SCALE GENOMIC DNA]</scope>
</reference>
<reference key="9">
    <citation type="journal article" date="2004" name="Genome Res.">
        <title>The status, quality, and expansion of the NIH full-length cDNA project: the Mammalian Gene Collection (MGC).</title>
        <authorList>
            <consortium name="The MGC Project Team"/>
        </authorList>
    </citation>
    <scope>NUCLEOTIDE SEQUENCE [LARGE SCALE MRNA] (ISOFORM 2)</scope>
    <source>
        <tissue>Cerebellum</tissue>
    </source>
</reference>
<reference key="10">
    <citation type="submission" date="1998-08" db="EMBL/GenBank/DDBJ databases">
        <title>Full-insert sequence of mapped XREF EST.</title>
        <authorList>
            <person name="Barrow I.K.-P."/>
            <person name="Boguski M.S."/>
            <person name="Touchman J.W."/>
            <person name="Spencer F."/>
        </authorList>
    </citation>
    <scope>NUCLEOTIDE SEQUENCE [LARGE SCALE MRNA] OF 1112-1302</scope>
</reference>
<reference key="11">
    <citation type="journal article" date="2006" name="Cell">
        <title>Global, in vivo, and site-specific phosphorylation dynamics in signaling networks.</title>
        <authorList>
            <person name="Olsen J.V."/>
            <person name="Blagoev B."/>
            <person name="Gnad F."/>
            <person name="Macek B."/>
            <person name="Kumar C."/>
            <person name="Mortensen P."/>
            <person name="Mann M."/>
        </authorList>
    </citation>
    <scope>PHOSPHORYLATION [LARGE SCALE ANALYSIS] AT SER-803</scope>
    <scope>IDENTIFICATION BY MASS SPECTROMETRY [LARGE SCALE ANALYSIS]</scope>
    <source>
        <tissue>Cervix carcinoma</tissue>
    </source>
</reference>
<reference key="12">
    <citation type="journal article" date="2006" name="Nat. Biotechnol.">
        <title>A probability-based approach for high-throughput protein phosphorylation analysis and site localization.</title>
        <authorList>
            <person name="Beausoleil S.A."/>
            <person name="Villen J."/>
            <person name="Gerber S.A."/>
            <person name="Rush J."/>
            <person name="Gygi S.P."/>
        </authorList>
    </citation>
    <scope>PHOSPHORYLATION [LARGE SCALE ANALYSIS] AT SER-31</scope>
    <scope>IDENTIFICATION BY MASS SPECTROMETRY [LARGE SCALE ANALYSIS]</scope>
    <source>
        <tissue>Cervix carcinoma</tissue>
    </source>
</reference>
<reference key="13">
    <citation type="journal article" date="2007" name="Nat. Cell Biol.">
        <title>The ubiquitin-selective chaperone CDC-48/p97 links myosin assembly to human myopathy.</title>
        <authorList>
            <person name="Janiesch P.C."/>
            <person name="Kim J."/>
            <person name="Mouysset J."/>
            <person name="Barikbin R."/>
            <person name="Lochmueller H."/>
            <person name="Cassata G."/>
            <person name="Krause S."/>
            <person name="Hoppe T."/>
        </authorList>
    </citation>
    <scope>FUNCTION</scope>
    <scope>INTERACTION WITH VCP; STUB1 AND UNC45B</scope>
    <scope>SUBCELLULAR LOCATION</scope>
    <scope>TISSUE SPECIFICITY</scope>
</reference>
<reference key="14">
    <citation type="journal article" date="2008" name="J. Proteome Res.">
        <title>Combining protein-based IMAC, peptide-based IMAC, and MudPIT for efficient phosphoproteomic analysis.</title>
        <authorList>
            <person name="Cantin G.T."/>
            <person name="Yi W."/>
            <person name="Lu B."/>
            <person name="Park S.K."/>
            <person name="Xu T."/>
            <person name="Lee J.-D."/>
            <person name="Yates J.R. III"/>
        </authorList>
    </citation>
    <scope>IDENTIFICATION BY MASS SPECTROMETRY [LARGE SCALE ANALYSIS]</scope>
    <source>
        <tissue>Cervix carcinoma</tissue>
    </source>
</reference>
<reference key="15">
    <citation type="journal article" date="2008" name="Mol. Cell">
        <title>Kinase-selective enrichment enables quantitative phosphoproteomics of the kinome across the cell cycle.</title>
        <authorList>
            <person name="Daub H."/>
            <person name="Olsen J.V."/>
            <person name="Bairlein M."/>
            <person name="Gnad F."/>
            <person name="Oppermann F.S."/>
            <person name="Korner R."/>
            <person name="Greff Z."/>
            <person name="Keri G."/>
            <person name="Stemmann O."/>
            <person name="Mann M."/>
        </authorList>
    </citation>
    <scope>PHOSPHORYLATION [LARGE SCALE ANALYSIS] AT SER-803</scope>
    <scope>IDENTIFICATION BY MASS SPECTROMETRY [LARGE SCALE ANALYSIS]</scope>
    <source>
        <tissue>Cervix carcinoma</tissue>
    </source>
</reference>
<reference key="16">
    <citation type="journal article" date="2008" name="Proc. Natl. Acad. Sci. U.S.A.">
        <title>A quantitative atlas of mitotic phosphorylation.</title>
        <authorList>
            <person name="Dephoure N."/>
            <person name="Zhou C."/>
            <person name="Villen J."/>
            <person name="Beausoleil S.A."/>
            <person name="Bakalarski C.E."/>
            <person name="Elledge S.J."/>
            <person name="Gygi S.P."/>
        </authorList>
    </citation>
    <scope>PHOSPHORYLATION [LARGE SCALE ANALYSIS] AT SER-31; SER-88; SER-90; SER-101 AND SER-803</scope>
    <scope>IDENTIFICATION BY MASS SPECTROMETRY [LARGE SCALE ANALYSIS]</scope>
    <source>
        <tissue>Cervix carcinoma</tissue>
    </source>
</reference>
<reference key="17">
    <citation type="journal article" date="2009" name="Anal. Chem.">
        <title>Lys-N and trypsin cover complementary parts of the phosphoproteome in a refined SCX-based approach.</title>
        <authorList>
            <person name="Gauci S."/>
            <person name="Helbig A.O."/>
            <person name="Slijper M."/>
            <person name="Krijgsveld J."/>
            <person name="Heck A.J."/>
            <person name="Mohammed S."/>
        </authorList>
    </citation>
    <scope>IDENTIFICATION BY MASS SPECTROMETRY [LARGE SCALE ANALYSIS]</scope>
</reference>
<reference key="18">
    <citation type="journal article" date="2009" name="Sci. Signal.">
        <title>Quantitative phosphoproteomic analysis of T cell receptor signaling reveals system-wide modulation of protein-protein interactions.</title>
        <authorList>
            <person name="Mayya V."/>
            <person name="Lundgren D.H."/>
            <person name="Hwang S.-I."/>
            <person name="Rezaul K."/>
            <person name="Wu L."/>
            <person name="Eng J.K."/>
            <person name="Rodionov V."/>
            <person name="Han D.K."/>
        </authorList>
    </citation>
    <scope>PHOSPHORYLATION [LARGE SCALE ANALYSIS] AT SER-84; SER-88; SER-90 AND SER-101</scope>
    <scope>IDENTIFICATION BY MASS SPECTROMETRY [LARGE SCALE ANALYSIS]</scope>
    <source>
        <tissue>Leukemic T-cell</tissue>
    </source>
</reference>
<reference key="19">
    <citation type="journal article" date="2010" name="Sci. Signal.">
        <title>Quantitative phosphoproteomics reveals widespread full phosphorylation site occupancy during mitosis.</title>
        <authorList>
            <person name="Olsen J.V."/>
            <person name="Vermeulen M."/>
            <person name="Santamaria A."/>
            <person name="Kumar C."/>
            <person name="Miller M.L."/>
            <person name="Jensen L.J."/>
            <person name="Gnad F."/>
            <person name="Cox J."/>
            <person name="Jensen T.S."/>
            <person name="Nigg E.A."/>
            <person name="Brunak S."/>
            <person name="Mann M."/>
        </authorList>
    </citation>
    <scope>PHOSPHORYLATION [LARGE SCALE ANALYSIS] AT SER-803 AND SER-1265</scope>
    <scope>IDENTIFICATION BY MASS SPECTROMETRY [LARGE SCALE ANALYSIS]</scope>
    <source>
        <tissue>Cervix carcinoma</tissue>
    </source>
</reference>
<reference key="20">
    <citation type="journal article" date="2011" name="BMC Syst. Biol.">
        <title>Initial characterization of the human central proteome.</title>
        <authorList>
            <person name="Burkard T.R."/>
            <person name="Planyavsky M."/>
            <person name="Kaupe I."/>
            <person name="Breitwieser F.P."/>
            <person name="Buerckstuemmer T."/>
            <person name="Bennett K.L."/>
            <person name="Superti-Furga G."/>
            <person name="Colinge J."/>
        </authorList>
    </citation>
    <scope>IDENTIFICATION BY MASS SPECTROMETRY [LARGE SCALE ANALYSIS]</scope>
</reference>
<reference key="21">
    <citation type="journal article" date="2011" name="Sci. Signal.">
        <title>System-wide temporal characterization of the proteome and phosphoproteome of human embryonic stem cell differentiation.</title>
        <authorList>
            <person name="Rigbolt K.T."/>
            <person name="Prokhorova T.A."/>
            <person name="Akimov V."/>
            <person name="Henningsen J."/>
            <person name="Johansen P.T."/>
            <person name="Kratchmarova I."/>
            <person name="Kassem M."/>
            <person name="Mann M."/>
            <person name="Olsen J.V."/>
            <person name="Blagoev B."/>
        </authorList>
    </citation>
    <scope>PHOSPHORYLATION [LARGE SCALE ANALYSIS] AT SER-103 AND SER-803</scope>
    <scope>IDENTIFICATION BY MASS SPECTROMETRY [LARGE SCALE ANALYSIS]</scope>
</reference>
<reference key="22">
    <citation type="journal article" date="2012" name="Mol. Cell. Proteomics">
        <title>Comparative large-scale characterisation of plant vs. mammal proteins reveals similar and idiosyncratic N-alpha acetylation features.</title>
        <authorList>
            <person name="Bienvenut W.V."/>
            <person name="Sumpton D."/>
            <person name="Martinez A."/>
            <person name="Lilla S."/>
            <person name="Espagne C."/>
            <person name="Meinnel T."/>
            <person name="Giglione C."/>
        </authorList>
    </citation>
    <scope>ACETYLATION [LARGE SCALE ANALYSIS] AT MET-1</scope>
    <scope>IDENTIFICATION BY MASS SPECTROMETRY [LARGE SCALE ANALYSIS]</scope>
</reference>
<reference key="23">
    <citation type="journal article" date="2012" name="Proc. Natl. Acad. Sci. U.S.A.">
        <title>N-terminal acetylome analyses and functional insights of the N-terminal acetyltransferase NatB.</title>
        <authorList>
            <person name="Van Damme P."/>
            <person name="Lasa M."/>
            <person name="Polevoda B."/>
            <person name="Gazquez C."/>
            <person name="Elosegui-Artola A."/>
            <person name="Kim D.S."/>
            <person name="De Juan-Pardo E."/>
            <person name="Demeyer K."/>
            <person name="Hole K."/>
            <person name="Larrea E."/>
            <person name="Timmerman E."/>
            <person name="Prieto J."/>
            <person name="Arnesen T."/>
            <person name="Sherman F."/>
            <person name="Gevaert K."/>
            <person name="Aldabe R."/>
        </authorList>
    </citation>
    <scope>ACETYLATION [LARGE SCALE ANALYSIS] AT MET-1</scope>
    <scope>IDENTIFICATION BY MASS SPECTROMETRY [LARGE SCALE ANALYSIS]</scope>
</reference>
<reference key="24">
    <citation type="journal article" date="2013" name="J. Proteome Res.">
        <title>Toward a comprehensive characterization of a human cancer cell phosphoproteome.</title>
        <authorList>
            <person name="Zhou H."/>
            <person name="Di Palma S."/>
            <person name="Preisinger C."/>
            <person name="Peng M."/>
            <person name="Polat A.N."/>
            <person name="Heck A.J."/>
            <person name="Mohammed S."/>
        </authorList>
    </citation>
    <scope>PHOSPHORYLATION [LARGE SCALE ANALYSIS] AT SER-23; SER-31; SER-101; SER-105; SER-124; SER-238; SER-383; SER-803 AND SER-1265</scope>
    <scope>IDENTIFICATION BY MASS SPECTROMETRY [LARGE SCALE ANALYSIS]</scope>
    <source>
        <tissue>Cervix carcinoma</tissue>
        <tissue>Erythroleukemia</tissue>
    </source>
</reference>
<reference key="25">
    <citation type="journal article" date="2014" name="J. Proteomics">
        <title>An enzyme assisted RP-RPLC approach for in-depth analysis of human liver phosphoproteome.</title>
        <authorList>
            <person name="Bian Y."/>
            <person name="Song C."/>
            <person name="Cheng K."/>
            <person name="Dong M."/>
            <person name="Wang F."/>
            <person name="Huang J."/>
            <person name="Sun D."/>
            <person name="Wang L."/>
            <person name="Ye M."/>
            <person name="Zou H."/>
        </authorList>
    </citation>
    <scope>PHOSPHORYLATION [LARGE SCALE ANALYSIS] AT SER-88</scope>
    <scope>IDENTIFICATION BY MASS SPECTROMETRY [LARGE SCALE ANALYSIS]</scope>
    <source>
        <tissue>Liver</tissue>
    </source>
</reference>
<feature type="chain" id="PRO_0000194993" description="Ubiquitin conjugation factor E4 B">
    <location>
        <begin position="1"/>
        <end position="1302"/>
    </location>
</feature>
<feature type="domain" description="U-box">
    <location>
        <begin position="1227"/>
        <end position="1300"/>
    </location>
</feature>
<feature type="region of interest" description="Disordered" evidence="3">
    <location>
        <begin position="1"/>
        <end position="155"/>
    </location>
</feature>
<feature type="region of interest" description="Disordered" evidence="3">
    <location>
        <begin position="299"/>
        <end position="406"/>
    </location>
</feature>
<feature type="region of interest" description="Disordered" evidence="3">
    <location>
        <begin position="1057"/>
        <end position="1077"/>
    </location>
</feature>
<feature type="compositionally biased region" description="Low complexity" evidence="3">
    <location>
        <begin position="16"/>
        <end position="33"/>
    </location>
</feature>
<feature type="compositionally biased region" description="Polar residues" evidence="3">
    <location>
        <begin position="51"/>
        <end position="64"/>
    </location>
</feature>
<feature type="compositionally biased region" description="Low complexity" evidence="3">
    <location>
        <begin position="76"/>
        <end position="99"/>
    </location>
</feature>
<feature type="compositionally biased region" description="Basic and acidic residues" evidence="3">
    <location>
        <begin position="134"/>
        <end position="147"/>
    </location>
</feature>
<feature type="compositionally biased region" description="Polar residues" evidence="3">
    <location>
        <begin position="299"/>
        <end position="327"/>
    </location>
</feature>
<feature type="compositionally biased region" description="Low complexity" evidence="3">
    <location>
        <begin position="340"/>
        <end position="374"/>
    </location>
</feature>
<feature type="compositionally biased region" description="Low complexity" evidence="3">
    <location>
        <begin position="384"/>
        <end position="400"/>
    </location>
</feature>
<feature type="compositionally biased region" description="Low complexity" evidence="3">
    <location>
        <begin position="1066"/>
        <end position="1077"/>
    </location>
</feature>
<feature type="site" description="Cleavage; by caspase-3 and caspase-7">
    <location>
        <begin position="109"/>
        <end position="110"/>
    </location>
</feature>
<feature type="site" description="Cleavage; by caspase-6 and granzyme B">
    <location>
        <begin position="123"/>
        <end position="124"/>
    </location>
</feature>
<feature type="modified residue" description="N-acetylmethionine" evidence="24 25">
    <location>
        <position position="1"/>
    </location>
</feature>
<feature type="modified residue" description="Phosphoserine" evidence="26">
    <location>
        <position position="23"/>
    </location>
</feature>
<feature type="modified residue" description="Phosphoserine" evidence="17 19 26">
    <location>
        <position position="31"/>
    </location>
</feature>
<feature type="modified residue" description="Phosphoserine" evidence="21">
    <location>
        <position position="84"/>
    </location>
</feature>
<feature type="modified residue" description="Phosphoserine" evidence="19 21 27">
    <location>
        <position position="88"/>
    </location>
</feature>
<feature type="modified residue" description="Phosphoserine" evidence="19 21">
    <location>
        <position position="90"/>
    </location>
</feature>
<feature type="modified residue" description="Phosphoserine" evidence="19 21 26">
    <location>
        <position position="101"/>
    </location>
</feature>
<feature type="modified residue" description="Phosphoserine" evidence="23">
    <location>
        <position position="103"/>
    </location>
</feature>
<feature type="modified residue" description="Phosphoserine" evidence="26">
    <location>
        <position position="105"/>
    </location>
</feature>
<feature type="modified residue" description="Phosphoserine" evidence="26">
    <location>
        <position position="124"/>
    </location>
</feature>
<feature type="modified residue" description="Phosphoserine" evidence="26">
    <location>
        <position position="238"/>
    </location>
</feature>
<feature type="modified residue" description="Phosphoserine" evidence="26">
    <location>
        <position position="383"/>
    </location>
</feature>
<feature type="modified residue" description="Phosphoserine" evidence="18 19 20 22 23 26">
    <location>
        <position position="803"/>
    </location>
</feature>
<feature type="modified residue" description="Phosphoserine" evidence="2">
    <location>
        <position position="969"/>
    </location>
</feature>
<feature type="modified residue" description="Phosphoserine" evidence="22 26">
    <location>
        <position position="1265"/>
    </location>
</feature>
<feature type="splice variant" id="VSP_007101" description="In isoform 3." evidence="12">
    <location>
        <begin position="1"/>
        <end position="116"/>
    </location>
</feature>
<feature type="splice variant" id="VSP_007102" description="In isoform 2 and isoform 3." evidence="6 7 8 9 11">
    <location>
        <begin position="270"/>
        <end position="398"/>
    </location>
</feature>
<feature type="splice variant" id="VSP_053372" description="In isoform 4." evidence="10">
    <original>P</original>
    <variation>PSMYDNPFSFLFLALSGDSSDEEDEEEDDDDGDGDDEGGGGGDDFSCVQFGS</variation>
    <location>
        <position position="398"/>
    </location>
</feature>
<feature type="splice variant" id="VSP_007103" description="In isoform 3." evidence="12">
    <original>D</original>
    <variation>GKWTH</variation>
    <location>
        <position position="1234"/>
    </location>
</feature>
<feature type="sequence variant" id="VAR_052437" description="In dbSNP:rs17034499.">
    <original>V</original>
    <variation>I</variation>
    <location>
        <position position="605"/>
    </location>
</feature>
<feature type="mutagenesis site" description="Abolishes cleavage by caspase-3 and caspase-7." evidence="4">
    <original>D</original>
    <variation>A</variation>
    <location>
        <position position="109"/>
    </location>
</feature>
<feature type="mutagenesis site" description="Abolishes cleavage by caspase-6. No effect on cleavage by granzyme B." evidence="4">
    <original>D</original>
    <variation>A</variation>
    <location>
        <position position="121"/>
    </location>
</feature>
<feature type="mutagenesis site" description="Abolishes cleavage by caspase-6 and granzyme B." evidence="4">
    <original>D</original>
    <variation>A</variation>
    <location>
        <position position="123"/>
    </location>
</feature>
<feature type="helix" evidence="30">
    <location>
        <begin position="1230"/>
        <end position="1232"/>
    </location>
</feature>
<feature type="turn" evidence="29">
    <location>
        <begin position="1235"/>
        <end position="1237"/>
    </location>
</feature>
<feature type="strand" evidence="30">
    <location>
        <begin position="1242"/>
        <end position="1246"/>
    </location>
</feature>
<feature type="turn" evidence="28">
    <location>
        <begin position="1248"/>
        <end position="1250"/>
    </location>
</feature>
<feature type="strand" evidence="30">
    <location>
        <begin position="1252"/>
        <end position="1254"/>
    </location>
</feature>
<feature type="helix" evidence="30">
    <location>
        <begin position="1255"/>
        <end position="1264"/>
    </location>
</feature>
<feature type="turn" evidence="30">
    <location>
        <begin position="1269"/>
        <end position="1271"/>
    </location>
</feature>
<feature type="helix" evidence="30">
    <location>
        <begin position="1277"/>
        <end position="1279"/>
    </location>
</feature>
<feature type="helix" evidence="30">
    <location>
        <begin position="1284"/>
        <end position="1294"/>
    </location>
</feature>
<feature type="turn" evidence="28">
    <location>
        <begin position="1296"/>
        <end position="1298"/>
    </location>
</feature>
<sequence length="1302" mass="146185">MEELSADEIRRRRLARLAGGQTSQPTTPLTSPQRENPPGPPIAASAPGPSQSLGLNVHNMTPATSPIGASGVAHRSQSSEGVSSLSSSPSNSLETQSQSLSRSQSMDIDGVSCEKSMSQVDVDSGIENMEVDENDRREKRSLSDKEPSSGPEVSEEQALQLVCKIFRVSWKDRDRDVIFLSSLSAQFKQNPKEVFSDFKDLIGQILMEVLMMSTQTRDENPFASLTATSQPIAAAARSPDRNLLLNTGSNPGTSPMFCSVASFGASSLSSLYESSPAPTPSFWSSVPVMGPSLASPSRAASQLAVPSTPLSPHSAASGTAAGSQPSSPRYRPYTVTHPWASSGVSILSSSPSPPALASSPQAVPASSSRQRPSSTGPPLPPASPSATSRRPSSLRISPSLGASGGASNWDSYSDHFTIETCKETDMLNYLIECFDRVGIEEKKAPKMCSQPAVSQLLSNIRSQCISHTALVLQGSLTQPRSLQQPSFLVPYMLCRNLPYGFIQELVRTTHQDEEVFKQIFIPILQGLALAAKECSLDSDYFKYPLMALGELCETKFGKTHPVCNLVASLRLWLPKSLSPGCGRELQRLSYLGAFFSFSVFAEDDVKVVEKYFSGPAITLENTRVVSQSLQHYLELGRQELFKILHSILLNGETREAALSYMAAVVNANMKKAQMQTDDRLVSTDGFMLNFLWVLQQLSTKIKLETVDPTYIFHPRCRITLPNDETRVNATMEDVNDWLTELYGDQPPFSEPKFPTECFFLTLHAHHLSILPSCRRYIRRLRAIRELNRTVEDLKNNESQWKDSPLATRHREMLKRCKTQLKKLVRCKACADAGLLDESFLRRCLNFYGLLIQLLLRILDPAYPDITLPLNSDVPKVFAALPEFYVEDVAEFLFFIVQYSPQALYEPCTQDIVMFLVVMLCNQNYIRNPYLVAKLVEVMFMTNPAVQPRTQKFFEMIENHPLSTKLLVPSLMKFYTDVEHTGATSEFYDKFTIRYHISTIFKSLWQNIAHHGTFMEEFNSGKQFVRYINMLINDTTFLLDESLESLKRIHEVQEEMKNKEQWDQLPRDQQQARQSQLAQDERVSRSYLALATETVDMFHILTKQVQKPFLRPELGPRLAAMLNFNLQQLCGPKCRDLKVENPEKYGFEPKKLLDQLTDIYLQLDCARFAKAIADDQRSYSKELFEEVISKMRKAGIKSTIAIEKFKLLAEKVEEIVAKNARAEIDYSDAPDEFRDPLMDTLMTDPVRLPSGTIMDRSIILRHLLNSPTDPFNRQTLTESMLEPVPELKEQIQAWMREKQNSDH</sequence>
<protein>
    <recommendedName>
        <fullName evidence="12">Ubiquitin conjugation factor E4 B</fullName>
        <ecNumber evidence="2">2.3.2.27</ecNumber>
    </recommendedName>
    <alternativeName>
        <fullName evidence="15">Homozygously deleted in neuroblastoma 1</fullName>
    </alternativeName>
    <alternativeName>
        <fullName>RING-type E3 ubiquitin transferase E4 B</fullName>
    </alternativeName>
    <alternativeName>
        <fullName evidence="13">Ubiquitin fusion degradation protein 2</fullName>
    </alternativeName>
</protein>
<accession>O95155</accession>
<accession>A8K8S9</accession>
<accession>G0ZJH6</accession>
<accession>O75169</accession>
<accession>O95338</accession>
<accession>Q5SZ12</accession>
<accession>Q5SZ16</accession>
<accession>Q96QD4</accession>
<accession>Q9BYI7</accession>
<comment type="function">
    <text evidence="1 2 5">Ubiquitin-protein ligase that probably functions as an E3 ligase in conjunction with specific E1 and E2 ligases (By similarity). May also function as an E4 ligase mediating the assembly of polyubiquitin chains on substrates ubiquitinated by another E3 ubiquitin ligase (By similarity). May regulate myosin assembly in striated muscles together with STUB1 and VCP/p97 by targeting myosin chaperone UNC45B for proteasomal degradation (PubMed:17369820).</text>
</comment>
<comment type="catalytic activity">
    <reaction evidence="2">
        <text>S-ubiquitinyl-[E2 ubiquitin-conjugating enzyme]-L-cysteine + [acceptor protein]-L-lysine = [E2 ubiquitin-conjugating enzyme]-L-cysteine + N(6)-ubiquitinyl-[acceptor protein]-L-lysine.</text>
        <dbReference type="EC" id="2.3.2.27"/>
    </reaction>
</comment>
<comment type="pathway">
    <text evidence="2">Protein modification; protein ubiquitination.</text>
</comment>
<comment type="subunit">
    <text evidence="5">Interacts with VCP/p97. Interacts with STUB1/CHIP and UNC45B.</text>
</comment>
<comment type="interaction">
    <interactant intactId="EBI-1641720">
        <id>O95155</id>
    </interactant>
    <interactant intactId="EBI-348604">
        <id>Q96S82</id>
        <label>UBL7</label>
    </interactant>
    <organismsDiffer>false</organismsDiffer>
    <experiments>2</experiments>
</comment>
<comment type="interaction">
    <interactant intactId="EBI-15869194">
        <id>O95155-1</id>
    </interactant>
    <interactant intactId="EBI-347677">
        <id>P62837</id>
        <label>UBE2D2</label>
    </interactant>
    <organismsDiffer>false</organismsDiffer>
    <experiments>2</experiments>
</comment>
<comment type="interaction">
    <interactant intactId="EBI-15869194">
        <id>O95155-1</id>
    </interactant>
    <interactant intactId="EBI-15567256">
        <id>P61077-1</id>
        <label>UBE2D3</label>
    </interactant>
    <organismsDiffer>false</organismsDiffer>
    <experiments>3</experiments>
</comment>
<comment type="subcellular location">
    <subcellularLocation>
        <location evidence="5">Cytoplasm</location>
    </subcellularLocation>
    <subcellularLocation>
        <location evidence="2">Nucleus</location>
    </subcellularLocation>
</comment>
<comment type="alternative products">
    <event type="alternative splicing"/>
    <isoform>
        <id>O95155-1</id>
        <name>1</name>
        <sequence type="displayed"/>
    </isoform>
    <isoform>
        <id>O95155-2</id>
        <name>2</name>
        <sequence type="described" ref="VSP_007102"/>
    </isoform>
    <isoform>
        <id>O95155-3</id>
        <name>3</name>
        <sequence type="described" ref="VSP_007101 VSP_007102 VSP_007103"/>
    </isoform>
    <isoform>
        <id>O95155-4</id>
        <name>4</name>
        <name>UFD2a-7/7a</name>
        <name>UFD2A-III</name>
        <sequence type="described" ref="VSP_053372"/>
    </isoform>
</comment>
<comment type="tissue specificity">
    <text evidence="4 5">Expressed in differentiated myotubes (at protein level) (PubMed:17369820). Highest expression in ovary, testis, heart and skeletal muscle (PubMed:11802788). Expression is low in colon, thymus and peripheral blood leukocytes (PubMed:11802788). Almost undetectable in lung and spleen (PubMed:11802788).</text>
</comment>
<comment type="domain">
    <text evidence="2">The U-box domain is required for the ubiquitin protein ligase activity.</text>
</comment>
<comment type="PTM">
    <text evidence="4">Proteolytically cleaved by caspases during apoptosis. Cleaved efficiently at Asp-123 by caspase-6 and granzyme B. Cleaved with approximately 10-fold less efficiency at Asp-109 by caspase-3 and caspase-7.</text>
</comment>
<comment type="miscellaneous">
    <molecule>Isoform 4</molecule>
    <text evidence="12">Expressed exclusively in mature striated muscle cells.</text>
</comment>
<comment type="similarity">
    <text evidence="12">Belongs to the ubiquitin conjugation factor E4 family.</text>
</comment>
<comment type="sequence caution" evidence="12">
    <conflict type="erroneous initiation">
        <sequence resource="EMBL-CDS" id="BAA31659"/>
    </conflict>
</comment>
<gene>
    <name evidence="16" type="primary">UBE4B</name>
    <name evidence="15" type="synonym">HDNB1</name>
    <name evidence="14" type="synonym">KIAA0684</name>
    <name evidence="13" type="synonym">UFD2</name>
</gene>
<evidence type="ECO:0000250" key="1">
    <source>
        <dbReference type="UniProtKB" id="P54860"/>
    </source>
</evidence>
<evidence type="ECO:0000250" key="2">
    <source>
        <dbReference type="UniProtKB" id="Q9ES00"/>
    </source>
</evidence>
<evidence type="ECO:0000256" key="3">
    <source>
        <dbReference type="SAM" id="MobiDB-lite"/>
    </source>
</evidence>
<evidence type="ECO:0000269" key="4">
    <source>
    </source>
</evidence>
<evidence type="ECO:0000269" key="5">
    <source>
    </source>
</evidence>
<evidence type="ECO:0000303" key="6">
    <source>
    </source>
</evidence>
<evidence type="ECO:0000303" key="7">
    <source>
    </source>
</evidence>
<evidence type="ECO:0000303" key="8">
    <source>
    </source>
</evidence>
<evidence type="ECO:0000303" key="9">
    <source>
    </source>
</evidence>
<evidence type="ECO:0000303" key="10">
    <source>
    </source>
</evidence>
<evidence type="ECO:0000303" key="11">
    <source>
    </source>
</evidence>
<evidence type="ECO:0000305" key="12"/>
<evidence type="ECO:0000312" key="13">
    <source>
        <dbReference type="EMBL" id="AAD02233.1"/>
    </source>
</evidence>
<evidence type="ECO:0000312" key="14">
    <source>
        <dbReference type="EMBL" id="BAA31659.3"/>
    </source>
</evidence>
<evidence type="ECO:0000312" key="15">
    <source>
        <dbReference type="EMBL" id="BAB40446.1"/>
    </source>
</evidence>
<evidence type="ECO:0000312" key="16">
    <source>
        <dbReference type="HGNC" id="HGNC:12500"/>
    </source>
</evidence>
<evidence type="ECO:0007744" key="17">
    <source>
    </source>
</evidence>
<evidence type="ECO:0007744" key="18">
    <source>
    </source>
</evidence>
<evidence type="ECO:0007744" key="19">
    <source>
    </source>
</evidence>
<evidence type="ECO:0007744" key="20">
    <source>
    </source>
</evidence>
<evidence type="ECO:0007744" key="21">
    <source>
    </source>
</evidence>
<evidence type="ECO:0007744" key="22">
    <source>
    </source>
</evidence>
<evidence type="ECO:0007744" key="23">
    <source>
    </source>
</evidence>
<evidence type="ECO:0007744" key="24">
    <source>
    </source>
</evidence>
<evidence type="ECO:0007744" key="25">
    <source>
    </source>
</evidence>
<evidence type="ECO:0007744" key="26">
    <source>
    </source>
</evidence>
<evidence type="ECO:0007744" key="27">
    <source>
    </source>
</evidence>
<evidence type="ECO:0007829" key="28">
    <source>
        <dbReference type="PDB" id="2KRE"/>
    </source>
</evidence>
<evidence type="ECO:0007829" key="29">
    <source>
        <dbReference type="PDB" id="3L1X"/>
    </source>
</evidence>
<evidence type="ECO:0007829" key="30">
    <source>
        <dbReference type="PDB" id="5O75"/>
    </source>
</evidence>
<organism>
    <name type="scientific">Homo sapiens</name>
    <name type="common">Human</name>
    <dbReference type="NCBI Taxonomy" id="9606"/>
    <lineage>
        <taxon>Eukaryota</taxon>
        <taxon>Metazoa</taxon>
        <taxon>Chordata</taxon>
        <taxon>Craniata</taxon>
        <taxon>Vertebrata</taxon>
        <taxon>Euteleostomi</taxon>
        <taxon>Mammalia</taxon>
        <taxon>Eutheria</taxon>
        <taxon>Euarchontoglires</taxon>
        <taxon>Primates</taxon>
        <taxon>Haplorrhini</taxon>
        <taxon>Catarrhini</taxon>
        <taxon>Hominidae</taxon>
        <taxon>Homo</taxon>
    </lineage>
</organism>
<dbReference type="EC" id="2.3.2.27" evidence="2"/>
<dbReference type="EMBL" id="AF043117">
    <property type="protein sequence ID" value="AAD02233.1"/>
    <property type="molecule type" value="mRNA"/>
</dbReference>
<dbReference type="EMBL" id="AB028839">
    <property type="protein sequence ID" value="BAB40446.1"/>
    <property type="molecule type" value="mRNA"/>
</dbReference>
<dbReference type="EMBL" id="AF331520">
    <property type="protein sequence ID" value="AAK69622.1"/>
    <property type="molecule type" value="mRNA"/>
</dbReference>
<dbReference type="EMBL" id="JF289274">
    <property type="protein sequence ID" value="AEK06331.1"/>
    <property type="molecule type" value="mRNA"/>
</dbReference>
<dbReference type="EMBL" id="AB014584">
    <property type="protein sequence ID" value="BAA31659.3"/>
    <property type="status" value="ALT_INIT"/>
    <property type="molecule type" value="mRNA"/>
</dbReference>
<dbReference type="EMBL" id="AK292444">
    <property type="protein sequence ID" value="BAF85133.1"/>
    <property type="molecule type" value="mRNA"/>
</dbReference>
<dbReference type="EMBL" id="AL096841">
    <property type="status" value="NOT_ANNOTATED_CDS"/>
    <property type="molecule type" value="Genomic_DNA"/>
</dbReference>
<dbReference type="EMBL" id="AL590639">
    <property type="status" value="NOT_ANNOTATED_CDS"/>
    <property type="molecule type" value="Genomic_DNA"/>
</dbReference>
<dbReference type="EMBL" id="BC093696">
    <property type="protein sequence ID" value="AAH93696.1"/>
    <property type="molecule type" value="mRNA"/>
</dbReference>
<dbReference type="EMBL" id="AF091093">
    <property type="protein sequence ID" value="AAC72962.1"/>
    <property type="status" value="ALT_SEQ"/>
    <property type="molecule type" value="mRNA"/>
</dbReference>
<dbReference type="CCDS" id="CCDS110.1">
    <molecule id="O95155-2"/>
</dbReference>
<dbReference type="CCDS" id="CCDS41245.1">
    <molecule id="O95155-1"/>
</dbReference>
<dbReference type="CCDS" id="CCDS90857.1">
    <molecule id="O95155-4"/>
</dbReference>
<dbReference type="PIR" id="T00358">
    <property type="entry name" value="T00358"/>
</dbReference>
<dbReference type="RefSeq" id="NP_001099032.1">
    <molecule id="O95155-1"/>
    <property type="nucleotide sequence ID" value="NM_001105562.3"/>
</dbReference>
<dbReference type="RefSeq" id="NP_001397673.1">
    <molecule id="O95155-4"/>
    <property type="nucleotide sequence ID" value="NM_001410744.1"/>
</dbReference>
<dbReference type="RefSeq" id="NP_006039.2">
    <molecule id="O95155-2"/>
    <property type="nucleotide sequence ID" value="NM_006048.4"/>
</dbReference>
<dbReference type="RefSeq" id="XP_005263479.1">
    <property type="nucleotide sequence ID" value="XM_005263422.1"/>
</dbReference>
<dbReference type="PDB" id="2KRE">
    <property type="method" value="NMR"/>
    <property type="chains" value="A=1208-1302"/>
</dbReference>
<dbReference type="PDB" id="3L1X">
    <property type="method" value="X-ray"/>
    <property type="resolution" value="2.60 A"/>
    <property type="chains" value="A=1208-1302"/>
</dbReference>
<dbReference type="PDB" id="3L1Z">
    <property type="method" value="X-ray"/>
    <property type="resolution" value="3.17 A"/>
    <property type="chains" value="B=1208-1302"/>
</dbReference>
<dbReference type="PDB" id="5O75">
    <property type="method" value="X-ray"/>
    <property type="resolution" value="1.48 A"/>
    <property type="chains" value="A=1226-1302"/>
</dbReference>
<dbReference type="PDBsum" id="2KRE"/>
<dbReference type="PDBsum" id="3L1X"/>
<dbReference type="PDBsum" id="3L1Z"/>
<dbReference type="PDBsum" id="5O75"/>
<dbReference type="SMR" id="O95155"/>
<dbReference type="BioGRID" id="115566">
    <property type="interactions" value="134"/>
</dbReference>
<dbReference type="DIP" id="DIP-40309N"/>
<dbReference type="FunCoup" id="O95155">
    <property type="interactions" value="3944"/>
</dbReference>
<dbReference type="IntAct" id="O95155">
    <property type="interactions" value="25"/>
</dbReference>
<dbReference type="MINT" id="O95155"/>
<dbReference type="STRING" id="9606.ENSP00000343001"/>
<dbReference type="GlyGen" id="O95155">
    <property type="glycosylation" value="4 sites, 1 O-linked glycan (3 sites)"/>
</dbReference>
<dbReference type="iPTMnet" id="O95155"/>
<dbReference type="PhosphoSitePlus" id="O95155"/>
<dbReference type="BioMuta" id="UBE4B"/>
<dbReference type="jPOST" id="O95155"/>
<dbReference type="MassIVE" id="O95155"/>
<dbReference type="PaxDb" id="9606-ENSP00000343001"/>
<dbReference type="PeptideAtlas" id="O95155"/>
<dbReference type="ProteomicsDB" id="50670">
    <molecule id="O95155-1"/>
</dbReference>
<dbReference type="ProteomicsDB" id="50671">
    <molecule id="O95155-2"/>
</dbReference>
<dbReference type="ProteomicsDB" id="50672">
    <molecule id="O95155-3"/>
</dbReference>
<dbReference type="Pumba" id="O95155"/>
<dbReference type="Antibodypedia" id="13520">
    <property type="antibodies" value="191 antibodies from 31 providers"/>
</dbReference>
<dbReference type="DNASU" id="10277"/>
<dbReference type="Ensembl" id="ENST00000253251.12">
    <molecule id="O95155-2"/>
    <property type="protein sequence ID" value="ENSP00000253251.8"/>
    <property type="gene ID" value="ENSG00000130939.20"/>
</dbReference>
<dbReference type="Ensembl" id="ENST00000343090.11">
    <molecule id="O95155-1"/>
    <property type="protein sequence ID" value="ENSP00000343001.6"/>
    <property type="gene ID" value="ENSG00000130939.20"/>
</dbReference>
<dbReference type="Ensembl" id="ENST00000672724.1">
    <molecule id="O95155-4"/>
    <property type="protein sequence ID" value="ENSP00000500453.1"/>
    <property type="gene ID" value="ENSG00000130939.20"/>
</dbReference>
<dbReference type="GeneID" id="10277"/>
<dbReference type="KEGG" id="hsa:10277"/>
<dbReference type="MANE-Select" id="ENST00000343090.11">
    <property type="protein sequence ID" value="ENSP00000343001.6"/>
    <property type="RefSeq nucleotide sequence ID" value="NM_001105562.3"/>
    <property type="RefSeq protein sequence ID" value="NP_001099032.1"/>
</dbReference>
<dbReference type="UCSC" id="uc001aqr.5">
    <molecule id="O95155-1"/>
    <property type="organism name" value="human"/>
</dbReference>
<dbReference type="AGR" id="HGNC:12500"/>
<dbReference type="CTD" id="10277"/>
<dbReference type="DisGeNET" id="10277"/>
<dbReference type="GeneCards" id="UBE4B"/>
<dbReference type="HGNC" id="HGNC:12500">
    <property type="gene designation" value="UBE4B"/>
</dbReference>
<dbReference type="HPA" id="ENSG00000130939">
    <property type="expression patterns" value="Low tissue specificity"/>
</dbReference>
<dbReference type="MalaCards" id="UBE4B"/>
<dbReference type="MIM" id="613565">
    <property type="type" value="gene"/>
</dbReference>
<dbReference type="neXtProt" id="NX_O95155"/>
<dbReference type="OpenTargets" id="ENSG00000130939"/>
<dbReference type="Orphanet" id="1606">
    <property type="disease" value="1p36 deletion syndrome"/>
</dbReference>
<dbReference type="PharmGKB" id="PA37148"/>
<dbReference type="VEuPathDB" id="HostDB:ENSG00000130939"/>
<dbReference type="eggNOG" id="KOG2042">
    <property type="taxonomic scope" value="Eukaryota"/>
</dbReference>
<dbReference type="GeneTree" id="ENSGT00390000009300"/>
<dbReference type="HOGENOM" id="CLU_003224_2_0_1"/>
<dbReference type="InParanoid" id="O95155"/>
<dbReference type="OMA" id="SNAFMTN"/>
<dbReference type="OrthoDB" id="20295at2759"/>
<dbReference type="PAN-GO" id="O95155">
    <property type="GO annotations" value="5 GO annotations based on evolutionary models"/>
</dbReference>
<dbReference type="PhylomeDB" id="O95155"/>
<dbReference type="TreeFam" id="TF300802"/>
<dbReference type="BRENDA" id="2.3.2.27">
    <property type="organism ID" value="2681"/>
</dbReference>
<dbReference type="BRENDA" id="2.3.2.B12">
    <property type="organism ID" value="2681"/>
</dbReference>
<dbReference type="PathwayCommons" id="O95155"/>
<dbReference type="SignaLink" id="O95155"/>
<dbReference type="SIGNOR" id="O95155"/>
<dbReference type="UniPathway" id="UPA00143"/>
<dbReference type="BioGRID-ORCS" id="10277">
    <property type="hits" value="100 hits in 1202 CRISPR screens"/>
</dbReference>
<dbReference type="ChiTaRS" id="UBE4B">
    <property type="organism name" value="human"/>
</dbReference>
<dbReference type="EvolutionaryTrace" id="O95155"/>
<dbReference type="GeneWiki" id="UBE4B"/>
<dbReference type="GenomeRNAi" id="10277"/>
<dbReference type="Pharos" id="O95155">
    <property type="development level" value="Tbio"/>
</dbReference>
<dbReference type="PRO" id="PR:O95155"/>
<dbReference type="Proteomes" id="UP000005640">
    <property type="component" value="Chromosome 1"/>
</dbReference>
<dbReference type="RNAct" id="O95155">
    <property type="molecule type" value="protein"/>
</dbReference>
<dbReference type="Bgee" id="ENSG00000130939">
    <property type="expression patterns" value="Expressed in buccal mucosa cell and 211 other cell types or tissues"/>
</dbReference>
<dbReference type="ExpressionAtlas" id="O95155">
    <property type="expression patterns" value="baseline and differential"/>
</dbReference>
<dbReference type="GO" id="GO:0005737">
    <property type="term" value="C:cytoplasm"/>
    <property type="evidence" value="ECO:0000250"/>
    <property type="project" value="UniProtKB"/>
</dbReference>
<dbReference type="GO" id="GO:0005634">
    <property type="term" value="C:nucleus"/>
    <property type="evidence" value="ECO:0000318"/>
    <property type="project" value="GO_Central"/>
</dbReference>
<dbReference type="GO" id="GO:0000151">
    <property type="term" value="C:ubiquitin ligase complex"/>
    <property type="evidence" value="ECO:0000304"/>
    <property type="project" value="UniProtKB"/>
</dbReference>
<dbReference type="GO" id="GO:0005524">
    <property type="term" value="F:ATP binding"/>
    <property type="evidence" value="ECO:0007669"/>
    <property type="project" value="Ensembl"/>
</dbReference>
<dbReference type="GO" id="GO:0019899">
    <property type="term" value="F:enzyme binding"/>
    <property type="evidence" value="ECO:0000250"/>
    <property type="project" value="UniProtKB"/>
</dbReference>
<dbReference type="GO" id="GO:0034450">
    <property type="term" value="F:ubiquitin-ubiquitin ligase activity"/>
    <property type="evidence" value="ECO:0000318"/>
    <property type="project" value="GO_Central"/>
</dbReference>
<dbReference type="GO" id="GO:0036503">
    <property type="term" value="P:ERAD pathway"/>
    <property type="evidence" value="ECO:0000318"/>
    <property type="project" value="GO_Central"/>
</dbReference>
<dbReference type="GO" id="GO:0008626">
    <property type="term" value="P:granzyme-mediated apoptotic signaling pathway"/>
    <property type="evidence" value="ECO:0000314"/>
    <property type="project" value="UniProtKB"/>
</dbReference>
<dbReference type="GO" id="GO:0031175">
    <property type="term" value="P:neuron projection development"/>
    <property type="evidence" value="ECO:0007669"/>
    <property type="project" value="Ensembl"/>
</dbReference>
<dbReference type="GO" id="GO:0043161">
    <property type="term" value="P:proteasome-mediated ubiquitin-dependent protein catabolic process"/>
    <property type="evidence" value="ECO:0000314"/>
    <property type="project" value="MGI"/>
</dbReference>
<dbReference type="GO" id="GO:0051865">
    <property type="term" value="P:protein autoubiquitination"/>
    <property type="evidence" value="ECO:0007669"/>
    <property type="project" value="Ensembl"/>
</dbReference>
<dbReference type="GO" id="GO:0006513">
    <property type="term" value="P:protein monoubiquitination"/>
    <property type="evidence" value="ECO:0007669"/>
    <property type="project" value="Ensembl"/>
</dbReference>
<dbReference type="GO" id="GO:0000209">
    <property type="term" value="P:protein polyubiquitination"/>
    <property type="evidence" value="ECO:0000318"/>
    <property type="project" value="GO_Central"/>
</dbReference>
<dbReference type="GO" id="GO:0009411">
    <property type="term" value="P:response to UV"/>
    <property type="evidence" value="ECO:0000314"/>
    <property type="project" value="UniProtKB"/>
</dbReference>
<dbReference type="GO" id="GO:0006511">
    <property type="term" value="P:ubiquitin-dependent protein catabolic process"/>
    <property type="evidence" value="ECO:0000304"/>
    <property type="project" value="UniProtKB"/>
</dbReference>
<dbReference type="GO" id="GO:0003222">
    <property type="term" value="P:ventricular trabecula myocardium morphogenesis"/>
    <property type="evidence" value="ECO:0007669"/>
    <property type="project" value="Ensembl"/>
</dbReference>
<dbReference type="CDD" id="cd16658">
    <property type="entry name" value="RING-Ubox_UBE4B"/>
    <property type="match status" value="1"/>
</dbReference>
<dbReference type="FunFam" id="3.30.40.10:FF:000060">
    <property type="entry name" value="ubiquitin conjugation factor E4 B"/>
    <property type="match status" value="1"/>
</dbReference>
<dbReference type="Gene3D" id="3.30.40.10">
    <property type="entry name" value="Zinc/RING finger domain, C3HC4 (zinc finger)"/>
    <property type="match status" value="1"/>
</dbReference>
<dbReference type="InterPro" id="IPR019474">
    <property type="entry name" value="Ub_conjug_fac_E4_core"/>
</dbReference>
<dbReference type="InterPro" id="IPR045132">
    <property type="entry name" value="UBE4"/>
</dbReference>
<dbReference type="InterPro" id="IPR003613">
    <property type="entry name" value="Ubox_domain"/>
</dbReference>
<dbReference type="InterPro" id="IPR013083">
    <property type="entry name" value="Znf_RING/FYVE/PHD"/>
</dbReference>
<dbReference type="PANTHER" id="PTHR13931:SF2">
    <property type="entry name" value="UBIQUITIN CONJUGATION FACTOR E4 B"/>
    <property type="match status" value="1"/>
</dbReference>
<dbReference type="PANTHER" id="PTHR13931">
    <property type="entry name" value="UBIQUITINATION FACTOR E4"/>
    <property type="match status" value="1"/>
</dbReference>
<dbReference type="Pfam" id="PF04564">
    <property type="entry name" value="U-box"/>
    <property type="match status" value="1"/>
</dbReference>
<dbReference type="Pfam" id="PF10408">
    <property type="entry name" value="Ufd2P_core"/>
    <property type="match status" value="1"/>
</dbReference>
<dbReference type="SMART" id="SM00504">
    <property type="entry name" value="Ubox"/>
    <property type="match status" value="1"/>
</dbReference>
<dbReference type="SUPFAM" id="SSF57850">
    <property type="entry name" value="RING/U-box"/>
    <property type="match status" value="1"/>
</dbReference>
<dbReference type="PROSITE" id="PS51698">
    <property type="entry name" value="U_BOX"/>
    <property type="match status" value="1"/>
</dbReference>